<name>EVPLL_HUMAN</name>
<sequence>MQASADQVERDILETQKRLQQDRLNSEQSQALQHQQETGSSLKEAEVLLKDLFLDVDKARRLKHPQAEETEKDIEQLHERVTQECAEYCALYEKMVLPPRRGIQGRLGTRAGAETEAGLRRPVWAGHGGAGGTDRGAQHRAEGDQRPRRAAAEPGGAGCRHHPEPIPRPTEGGVVARAEPGQPVHALQGCTWQLSALAEQQRRILQQDWSDLMADPAGVRREYEHFKQHELLSQEQSVNQLEEDGKRMVELRHPAVGPIQAHQEALKMEWQNFLNLCICQETQLQHVEDYSRILCPSSSPH</sequence>
<dbReference type="EMBL" id="AK298286">
    <property type="protein sequence ID" value="BAG60546.1"/>
    <property type="molecule type" value="mRNA"/>
</dbReference>
<dbReference type="EMBL" id="AL353997">
    <property type="status" value="NOT_ANNOTATED_CDS"/>
    <property type="molecule type" value="Genomic_DNA"/>
</dbReference>
<dbReference type="EMBL" id="BC026998">
    <property type="status" value="NOT_ANNOTATED_CDS"/>
    <property type="molecule type" value="mRNA"/>
</dbReference>
<dbReference type="EMBL" id="BC036791">
    <property type="status" value="NOT_ANNOTATED_CDS"/>
    <property type="molecule type" value="mRNA"/>
</dbReference>
<dbReference type="CCDS" id="CCDS45626.1"/>
<dbReference type="RefSeq" id="NP_001138599.1">
    <property type="nucleotide sequence ID" value="NM_001145127.2"/>
</dbReference>
<dbReference type="RefSeq" id="XP_047292493.1">
    <property type="nucleotide sequence ID" value="XM_047436537.1"/>
</dbReference>
<dbReference type="RefSeq" id="XP_054172896.1">
    <property type="nucleotide sequence ID" value="XM_054316921.1"/>
</dbReference>
<dbReference type="RefSeq" id="XP_054188067.1">
    <property type="nucleotide sequence ID" value="XM_054332092.1"/>
</dbReference>
<dbReference type="BioGRID" id="570097">
    <property type="interactions" value="2"/>
</dbReference>
<dbReference type="STRING" id="9606.ENSP00000382086"/>
<dbReference type="iPTMnet" id="A8MZ36"/>
<dbReference type="PhosphoSitePlus" id="A8MZ36"/>
<dbReference type="BioMuta" id="EVPLL"/>
<dbReference type="jPOST" id="A8MZ36"/>
<dbReference type="MassIVE" id="A8MZ36"/>
<dbReference type="PaxDb" id="9606-ENSP00000382086"/>
<dbReference type="PeptideAtlas" id="A8MZ36"/>
<dbReference type="ProteomicsDB" id="2451"/>
<dbReference type="Antibodypedia" id="49961">
    <property type="antibodies" value="82 antibodies from 16 providers"/>
</dbReference>
<dbReference type="DNASU" id="645027"/>
<dbReference type="Ensembl" id="ENST00000399134.5">
    <property type="protein sequence ID" value="ENSP00000382086.4"/>
    <property type="gene ID" value="ENSG00000214860.5"/>
</dbReference>
<dbReference type="Ensembl" id="ENST00000640722.2">
    <property type="protein sequence ID" value="ENSP00000492399.1"/>
    <property type="gene ID" value="ENSG00000284166.2"/>
</dbReference>
<dbReference type="GeneID" id="645027"/>
<dbReference type="KEGG" id="hsa:645027"/>
<dbReference type="MANE-Select" id="ENST00000399134.5">
    <property type="protein sequence ID" value="ENSP00000382086.4"/>
    <property type="RefSeq nucleotide sequence ID" value="NM_001145127.2"/>
    <property type="RefSeq protein sequence ID" value="NP_001138599.1"/>
</dbReference>
<dbReference type="UCSC" id="uc002gte.4">
    <property type="organism name" value="human"/>
</dbReference>
<dbReference type="AGR" id="HGNC:35236"/>
<dbReference type="CTD" id="645027"/>
<dbReference type="DisGeNET" id="645027"/>
<dbReference type="GeneCards" id="EVPLL"/>
<dbReference type="HGNC" id="HGNC:35236">
    <property type="gene designation" value="EVPLL"/>
</dbReference>
<dbReference type="HPA" id="ENSG00000214860">
    <property type="expression patterns" value="Tissue enhanced (esophagus, skin, vagina)"/>
</dbReference>
<dbReference type="neXtProt" id="NX_A8MZ36"/>
<dbReference type="OpenTargets" id="ENSG00000214860"/>
<dbReference type="PharmGKB" id="PA164719396"/>
<dbReference type="VEuPathDB" id="HostDB:ENSG00000214860"/>
<dbReference type="eggNOG" id="KOG0516">
    <property type="taxonomic scope" value="Eukaryota"/>
</dbReference>
<dbReference type="GeneTree" id="ENSGT00940000153578"/>
<dbReference type="HOGENOM" id="CLU_924266_0_0_1"/>
<dbReference type="InParanoid" id="A8MZ36"/>
<dbReference type="OMA" id="CTWQLSA"/>
<dbReference type="OrthoDB" id="9945740at2759"/>
<dbReference type="PAN-GO" id="A8MZ36">
    <property type="GO annotations" value="6 GO annotations based on evolutionary models"/>
</dbReference>
<dbReference type="PhylomeDB" id="A8MZ36"/>
<dbReference type="PathwayCommons" id="A8MZ36"/>
<dbReference type="BioGRID-ORCS" id="645027">
    <property type="hits" value="11 hits in 1136 CRISPR screens"/>
</dbReference>
<dbReference type="ChiTaRS" id="EVPLL">
    <property type="organism name" value="human"/>
</dbReference>
<dbReference type="GenomeRNAi" id="645027"/>
<dbReference type="Pharos" id="A8MZ36">
    <property type="development level" value="Tdark"/>
</dbReference>
<dbReference type="PRO" id="PR:A8MZ36"/>
<dbReference type="Proteomes" id="UP000005640">
    <property type="component" value="Chromosome 17"/>
</dbReference>
<dbReference type="RNAct" id="A8MZ36">
    <property type="molecule type" value="protein"/>
</dbReference>
<dbReference type="Bgee" id="ENSG00000214860">
    <property type="expression patterns" value="Expressed in lower esophagus mucosa and 62 other cell types or tissues"/>
</dbReference>
<dbReference type="GO" id="GO:0045104">
    <property type="term" value="P:intermediate filament cytoskeleton organization"/>
    <property type="evidence" value="ECO:0007669"/>
    <property type="project" value="InterPro"/>
</dbReference>
<dbReference type="FunFam" id="1.20.58.60:FF:000142">
    <property type="entry name" value="Envoplakin like"/>
    <property type="match status" value="1"/>
</dbReference>
<dbReference type="FunFam" id="1.20.58.60:FF:000339">
    <property type="entry name" value="Envoplakin like"/>
    <property type="match status" value="1"/>
</dbReference>
<dbReference type="Gene3D" id="1.20.58.60">
    <property type="match status" value="2"/>
</dbReference>
<dbReference type="InterPro" id="IPR043197">
    <property type="entry name" value="Plakin"/>
</dbReference>
<dbReference type="InterPro" id="IPR055419">
    <property type="entry name" value="Spectrin_PEPL/EVPL"/>
</dbReference>
<dbReference type="PANTHER" id="PTHR23169">
    <property type="entry name" value="ENVOPLAKIN"/>
    <property type="match status" value="1"/>
</dbReference>
<dbReference type="PANTHER" id="PTHR23169:SF7">
    <property type="entry name" value="ENVOPLAKIN"/>
    <property type="match status" value="1"/>
</dbReference>
<dbReference type="Pfam" id="PF23160">
    <property type="entry name" value="Spectrin_1st_PEPL"/>
    <property type="match status" value="1"/>
</dbReference>
<dbReference type="SUPFAM" id="SSF46966">
    <property type="entry name" value="Spectrin repeat"/>
    <property type="match status" value="1"/>
</dbReference>
<proteinExistence type="evidence at protein level"/>
<protein>
    <recommendedName>
        <fullName>Envoplakin-like protein</fullName>
    </recommendedName>
</protein>
<accession>A8MZ36</accession>
<accession>B4DPD4</accession>
<reference key="1">
    <citation type="journal article" date="2004" name="Nat. Genet.">
        <title>Complete sequencing and characterization of 21,243 full-length human cDNAs.</title>
        <authorList>
            <person name="Ota T."/>
            <person name="Suzuki Y."/>
            <person name="Nishikawa T."/>
            <person name="Otsuki T."/>
            <person name="Sugiyama T."/>
            <person name="Irie R."/>
            <person name="Wakamatsu A."/>
            <person name="Hayashi K."/>
            <person name="Sato H."/>
            <person name="Nagai K."/>
            <person name="Kimura K."/>
            <person name="Makita H."/>
            <person name="Sekine M."/>
            <person name="Obayashi M."/>
            <person name="Nishi T."/>
            <person name="Shibahara T."/>
            <person name="Tanaka T."/>
            <person name="Ishii S."/>
            <person name="Yamamoto J."/>
            <person name="Saito K."/>
            <person name="Kawai Y."/>
            <person name="Isono Y."/>
            <person name="Nakamura Y."/>
            <person name="Nagahari K."/>
            <person name="Murakami K."/>
            <person name="Yasuda T."/>
            <person name="Iwayanagi T."/>
            <person name="Wagatsuma M."/>
            <person name="Shiratori A."/>
            <person name="Sudo H."/>
            <person name="Hosoiri T."/>
            <person name="Kaku Y."/>
            <person name="Kodaira H."/>
            <person name="Kondo H."/>
            <person name="Sugawara M."/>
            <person name="Takahashi M."/>
            <person name="Kanda K."/>
            <person name="Yokoi T."/>
            <person name="Furuya T."/>
            <person name="Kikkawa E."/>
            <person name="Omura Y."/>
            <person name="Abe K."/>
            <person name="Kamihara K."/>
            <person name="Katsuta N."/>
            <person name="Sato K."/>
            <person name="Tanikawa M."/>
            <person name="Yamazaki M."/>
            <person name="Ninomiya K."/>
            <person name="Ishibashi T."/>
            <person name="Yamashita H."/>
            <person name="Murakawa K."/>
            <person name="Fujimori K."/>
            <person name="Tanai H."/>
            <person name="Kimata M."/>
            <person name="Watanabe M."/>
            <person name="Hiraoka S."/>
            <person name="Chiba Y."/>
            <person name="Ishida S."/>
            <person name="Ono Y."/>
            <person name="Takiguchi S."/>
            <person name="Watanabe S."/>
            <person name="Yosida M."/>
            <person name="Hotuta T."/>
            <person name="Kusano J."/>
            <person name="Kanehori K."/>
            <person name="Takahashi-Fujii A."/>
            <person name="Hara H."/>
            <person name="Tanase T.-O."/>
            <person name="Nomura Y."/>
            <person name="Togiya S."/>
            <person name="Komai F."/>
            <person name="Hara R."/>
            <person name="Takeuchi K."/>
            <person name="Arita M."/>
            <person name="Imose N."/>
            <person name="Musashino K."/>
            <person name="Yuuki H."/>
            <person name="Oshima A."/>
            <person name="Sasaki N."/>
            <person name="Aotsuka S."/>
            <person name="Yoshikawa Y."/>
            <person name="Matsunawa H."/>
            <person name="Ichihara T."/>
            <person name="Shiohata N."/>
            <person name="Sano S."/>
            <person name="Moriya S."/>
            <person name="Momiyama H."/>
            <person name="Satoh N."/>
            <person name="Takami S."/>
            <person name="Terashima Y."/>
            <person name="Suzuki O."/>
            <person name="Nakagawa S."/>
            <person name="Senoh A."/>
            <person name="Mizoguchi H."/>
            <person name="Goto Y."/>
            <person name="Shimizu F."/>
            <person name="Wakebe H."/>
            <person name="Hishigaki H."/>
            <person name="Watanabe T."/>
            <person name="Sugiyama A."/>
            <person name="Takemoto M."/>
            <person name="Kawakami B."/>
            <person name="Yamazaki M."/>
            <person name="Watanabe K."/>
            <person name="Kumagai A."/>
            <person name="Itakura S."/>
            <person name="Fukuzumi Y."/>
            <person name="Fujimori Y."/>
            <person name="Komiyama M."/>
            <person name="Tashiro H."/>
            <person name="Tanigami A."/>
            <person name="Fujiwara T."/>
            <person name="Ono T."/>
            <person name="Yamada K."/>
            <person name="Fujii Y."/>
            <person name="Ozaki K."/>
            <person name="Hirao M."/>
            <person name="Ohmori Y."/>
            <person name="Kawabata A."/>
            <person name="Hikiji T."/>
            <person name="Kobatake N."/>
            <person name="Inagaki H."/>
            <person name="Ikema Y."/>
            <person name="Okamoto S."/>
            <person name="Okitani R."/>
            <person name="Kawakami T."/>
            <person name="Noguchi S."/>
            <person name="Itoh T."/>
            <person name="Shigeta K."/>
            <person name="Senba T."/>
            <person name="Matsumura K."/>
            <person name="Nakajima Y."/>
            <person name="Mizuno T."/>
            <person name="Morinaga M."/>
            <person name="Sasaki M."/>
            <person name="Togashi T."/>
            <person name="Oyama M."/>
            <person name="Hata H."/>
            <person name="Watanabe M."/>
            <person name="Komatsu T."/>
            <person name="Mizushima-Sugano J."/>
            <person name="Satoh T."/>
            <person name="Shirai Y."/>
            <person name="Takahashi Y."/>
            <person name="Nakagawa K."/>
            <person name="Okumura K."/>
            <person name="Nagase T."/>
            <person name="Nomura N."/>
            <person name="Kikuchi H."/>
            <person name="Masuho Y."/>
            <person name="Yamashita R."/>
            <person name="Nakai K."/>
            <person name="Yada T."/>
            <person name="Nakamura Y."/>
            <person name="Ohara O."/>
            <person name="Isogai T."/>
            <person name="Sugano S."/>
        </authorList>
    </citation>
    <scope>NUCLEOTIDE SEQUENCE [LARGE SCALE MRNA]</scope>
    <scope>VARIANT ASN-4</scope>
    <source>
        <tissue>Kidney</tissue>
    </source>
</reference>
<reference key="2">
    <citation type="journal article" date="2006" name="Nature">
        <title>DNA sequence of human chromosome 17 and analysis of rearrangement in the human lineage.</title>
        <authorList>
            <person name="Zody M.C."/>
            <person name="Garber M."/>
            <person name="Adams D.J."/>
            <person name="Sharpe T."/>
            <person name="Harrow J."/>
            <person name="Lupski J.R."/>
            <person name="Nicholson C."/>
            <person name="Searle S.M."/>
            <person name="Wilming L."/>
            <person name="Young S.K."/>
            <person name="Abouelleil A."/>
            <person name="Allen N.R."/>
            <person name="Bi W."/>
            <person name="Bloom T."/>
            <person name="Borowsky M.L."/>
            <person name="Bugalter B.E."/>
            <person name="Butler J."/>
            <person name="Chang J.L."/>
            <person name="Chen C.-K."/>
            <person name="Cook A."/>
            <person name="Corum B."/>
            <person name="Cuomo C.A."/>
            <person name="de Jong P.J."/>
            <person name="DeCaprio D."/>
            <person name="Dewar K."/>
            <person name="FitzGerald M."/>
            <person name="Gilbert J."/>
            <person name="Gibson R."/>
            <person name="Gnerre S."/>
            <person name="Goldstein S."/>
            <person name="Grafham D.V."/>
            <person name="Grocock R."/>
            <person name="Hafez N."/>
            <person name="Hagopian D.S."/>
            <person name="Hart E."/>
            <person name="Norman C.H."/>
            <person name="Humphray S."/>
            <person name="Jaffe D.B."/>
            <person name="Jones M."/>
            <person name="Kamal M."/>
            <person name="Khodiyar V.K."/>
            <person name="LaButti K."/>
            <person name="Laird G."/>
            <person name="Lehoczky J."/>
            <person name="Liu X."/>
            <person name="Lokyitsang T."/>
            <person name="Loveland J."/>
            <person name="Lui A."/>
            <person name="Macdonald P."/>
            <person name="Major J.E."/>
            <person name="Matthews L."/>
            <person name="Mauceli E."/>
            <person name="McCarroll S.A."/>
            <person name="Mihalev A.H."/>
            <person name="Mudge J."/>
            <person name="Nguyen C."/>
            <person name="Nicol R."/>
            <person name="O'Leary S.B."/>
            <person name="Osoegawa K."/>
            <person name="Schwartz D.C."/>
            <person name="Shaw-Smith C."/>
            <person name="Stankiewicz P."/>
            <person name="Steward C."/>
            <person name="Swarbreck D."/>
            <person name="Venkataraman V."/>
            <person name="Whittaker C.A."/>
            <person name="Yang X."/>
            <person name="Zimmer A.R."/>
            <person name="Bradley A."/>
            <person name="Hubbard T."/>
            <person name="Birren B.W."/>
            <person name="Rogers J."/>
            <person name="Lander E.S."/>
            <person name="Nusbaum C."/>
        </authorList>
    </citation>
    <scope>NUCLEOTIDE SEQUENCE [LARGE SCALE GENOMIC DNA]</scope>
</reference>
<reference key="3">
    <citation type="journal article" date="2004" name="Genome Res.">
        <title>The status, quality, and expansion of the NIH full-length cDNA project: the Mammalian Gene Collection (MGC).</title>
        <authorList>
            <consortium name="The MGC Project Team"/>
        </authorList>
    </citation>
    <scope>NUCLEOTIDE SEQUENCE [LARGE SCALE MRNA]</scope>
</reference>
<evidence type="ECO:0000255" key="1"/>
<evidence type="ECO:0000256" key="2">
    <source>
        <dbReference type="SAM" id="MobiDB-lite"/>
    </source>
</evidence>
<evidence type="ECO:0000269" key="3">
    <source>
    </source>
</evidence>
<evidence type="ECO:0000305" key="4"/>
<organism>
    <name type="scientific">Homo sapiens</name>
    <name type="common">Human</name>
    <dbReference type="NCBI Taxonomy" id="9606"/>
    <lineage>
        <taxon>Eukaryota</taxon>
        <taxon>Metazoa</taxon>
        <taxon>Chordata</taxon>
        <taxon>Craniata</taxon>
        <taxon>Vertebrata</taxon>
        <taxon>Euteleostomi</taxon>
        <taxon>Mammalia</taxon>
        <taxon>Eutheria</taxon>
        <taxon>Euarchontoglires</taxon>
        <taxon>Primates</taxon>
        <taxon>Haplorrhini</taxon>
        <taxon>Catarrhini</taxon>
        <taxon>Hominidae</taxon>
        <taxon>Homo</taxon>
    </lineage>
</organism>
<comment type="similarity">
    <text evidence="4">Belongs to the plakin or cytolinker family.</text>
</comment>
<keyword id="KW-0175">Coiled coil</keyword>
<keyword id="KW-1267">Proteomics identification</keyword>
<keyword id="KW-1185">Reference proteome</keyword>
<gene>
    <name type="primary">EVPLL</name>
</gene>
<feature type="chain" id="PRO_0000395323" description="Envoplakin-like protein">
    <location>
        <begin position="1"/>
        <end position="301"/>
    </location>
</feature>
<feature type="region of interest" description="Disordered" evidence="2">
    <location>
        <begin position="18"/>
        <end position="41"/>
    </location>
</feature>
<feature type="region of interest" description="Disordered" evidence="2">
    <location>
        <begin position="118"/>
        <end position="166"/>
    </location>
</feature>
<feature type="coiled-coil region" evidence="1">
    <location>
        <begin position="1"/>
        <end position="88"/>
    </location>
</feature>
<feature type="compositionally biased region" description="Polar residues" evidence="2">
    <location>
        <begin position="26"/>
        <end position="41"/>
    </location>
</feature>
<feature type="compositionally biased region" description="Basic and acidic residues" evidence="2">
    <location>
        <begin position="136"/>
        <end position="151"/>
    </location>
</feature>
<feature type="sequence variant" id="VAR_063399" description="In dbSNP:rs570145." evidence="3">
    <original>S</original>
    <variation>N</variation>
    <location>
        <position position="4"/>
    </location>
</feature>